<reference key="1">
    <citation type="submission" date="2001-10" db="EMBL/GenBank/DDBJ databases">
        <title>Arabidopsis thaliana transcription factor WRKY29.</title>
        <authorList>
            <person name="Ulker B."/>
            <person name="Kushnir S."/>
            <person name="Somssich I.E."/>
        </authorList>
    </citation>
    <scope>NUCLEOTIDE SEQUENCE [MRNA]</scope>
    <source>
        <strain>cv. Columbia</strain>
        <tissue>Flower</tissue>
    </source>
</reference>
<reference key="2">
    <citation type="journal article" date="1999" name="Nature">
        <title>Sequence and analysis of chromosome 4 of the plant Arabidopsis thaliana.</title>
        <authorList>
            <person name="Mayer K.F.X."/>
            <person name="Schueller C."/>
            <person name="Wambutt R."/>
            <person name="Murphy G."/>
            <person name="Volckaert G."/>
            <person name="Pohl T."/>
            <person name="Duesterhoeft A."/>
            <person name="Stiekema W."/>
            <person name="Entian K.-D."/>
            <person name="Terryn N."/>
            <person name="Harris B."/>
            <person name="Ansorge W."/>
            <person name="Brandt P."/>
            <person name="Grivell L.A."/>
            <person name="Rieger M."/>
            <person name="Weichselgartner M."/>
            <person name="de Simone V."/>
            <person name="Obermaier B."/>
            <person name="Mache R."/>
            <person name="Mueller M."/>
            <person name="Kreis M."/>
            <person name="Delseny M."/>
            <person name="Puigdomenech P."/>
            <person name="Watson M."/>
            <person name="Schmidtheini T."/>
            <person name="Reichert B."/>
            <person name="Portetelle D."/>
            <person name="Perez-Alonso M."/>
            <person name="Boutry M."/>
            <person name="Bancroft I."/>
            <person name="Vos P."/>
            <person name="Hoheisel J."/>
            <person name="Zimmermann W."/>
            <person name="Wedler H."/>
            <person name="Ridley P."/>
            <person name="Langham S.-A."/>
            <person name="McCullagh B."/>
            <person name="Bilham L."/>
            <person name="Robben J."/>
            <person name="van der Schueren J."/>
            <person name="Grymonprez B."/>
            <person name="Chuang Y.-J."/>
            <person name="Vandenbussche F."/>
            <person name="Braeken M."/>
            <person name="Weltjens I."/>
            <person name="Voet M."/>
            <person name="Bastiaens I."/>
            <person name="Aert R."/>
            <person name="Defoor E."/>
            <person name="Weitzenegger T."/>
            <person name="Bothe G."/>
            <person name="Ramsperger U."/>
            <person name="Hilbert H."/>
            <person name="Braun M."/>
            <person name="Holzer E."/>
            <person name="Brandt A."/>
            <person name="Peters S."/>
            <person name="van Staveren M."/>
            <person name="Dirkse W."/>
            <person name="Mooijman P."/>
            <person name="Klein Lankhorst R."/>
            <person name="Rose M."/>
            <person name="Hauf J."/>
            <person name="Koetter P."/>
            <person name="Berneiser S."/>
            <person name="Hempel S."/>
            <person name="Feldpausch M."/>
            <person name="Lamberth S."/>
            <person name="Van den Daele H."/>
            <person name="De Keyser A."/>
            <person name="Buysshaert C."/>
            <person name="Gielen J."/>
            <person name="Villarroel R."/>
            <person name="De Clercq R."/>
            <person name="van Montagu M."/>
            <person name="Rogers J."/>
            <person name="Cronin A."/>
            <person name="Quail M.A."/>
            <person name="Bray-Allen S."/>
            <person name="Clark L."/>
            <person name="Doggett J."/>
            <person name="Hall S."/>
            <person name="Kay M."/>
            <person name="Lennard N."/>
            <person name="McLay K."/>
            <person name="Mayes R."/>
            <person name="Pettett A."/>
            <person name="Rajandream M.A."/>
            <person name="Lyne M."/>
            <person name="Benes V."/>
            <person name="Rechmann S."/>
            <person name="Borkova D."/>
            <person name="Bloecker H."/>
            <person name="Scharfe M."/>
            <person name="Grimm M."/>
            <person name="Loehnert T.-H."/>
            <person name="Dose S."/>
            <person name="de Haan M."/>
            <person name="Maarse A.C."/>
            <person name="Schaefer M."/>
            <person name="Mueller-Auer S."/>
            <person name="Gabel C."/>
            <person name="Fuchs M."/>
            <person name="Fartmann B."/>
            <person name="Granderath K."/>
            <person name="Dauner D."/>
            <person name="Herzl A."/>
            <person name="Neumann S."/>
            <person name="Argiriou A."/>
            <person name="Vitale D."/>
            <person name="Liguori R."/>
            <person name="Piravandi E."/>
            <person name="Massenet O."/>
            <person name="Quigley F."/>
            <person name="Clabauld G."/>
            <person name="Muendlein A."/>
            <person name="Felber R."/>
            <person name="Schnabl S."/>
            <person name="Hiller R."/>
            <person name="Schmidt W."/>
            <person name="Lecharny A."/>
            <person name="Aubourg S."/>
            <person name="Chefdor F."/>
            <person name="Cooke R."/>
            <person name="Berger C."/>
            <person name="Monfort A."/>
            <person name="Casacuberta E."/>
            <person name="Gibbons T."/>
            <person name="Weber N."/>
            <person name="Vandenbol M."/>
            <person name="Bargues M."/>
            <person name="Terol J."/>
            <person name="Torres A."/>
            <person name="Perez-Perez A."/>
            <person name="Purnelle B."/>
            <person name="Bent E."/>
            <person name="Johnson S."/>
            <person name="Tacon D."/>
            <person name="Jesse T."/>
            <person name="Heijnen L."/>
            <person name="Schwarz S."/>
            <person name="Scholler P."/>
            <person name="Heber S."/>
            <person name="Francs P."/>
            <person name="Bielke C."/>
            <person name="Frishman D."/>
            <person name="Haase D."/>
            <person name="Lemcke K."/>
            <person name="Mewes H.-W."/>
            <person name="Stocker S."/>
            <person name="Zaccaria P."/>
            <person name="Bevan M."/>
            <person name="Wilson R.K."/>
            <person name="de la Bastide M."/>
            <person name="Habermann K."/>
            <person name="Parnell L."/>
            <person name="Dedhia N."/>
            <person name="Gnoj L."/>
            <person name="Schutz K."/>
            <person name="Huang E."/>
            <person name="Spiegel L."/>
            <person name="Sekhon M."/>
            <person name="Murray J."/>
            <person name="Sheet P."/>
            <person name="Cordes M."/>
            <person name="Abu-Threideh J."/>
            <person name="Stoneking T."/>
            <person name="Kalicki J."/>
            <person name="Graves T."/>
            <person name="Harmon G."/>
            <person name="Edwards J."/>
            <person name="Latreille P."/>
            <person name="Courtney L."/>
            <person name="Cloud J."/>
            <person name="Abbott A."/>
            <person name="Scott K."/>
            <person name="Johnson D."/>
            <person name="Minx P."/>
            <person name="Bentley D."/>
            <person name="Fulton B."/>
            <person name="Miller N."/>
            <person name="Greco T."/>
            <person name="Kemp K."/>
            <person name="Kramer J."/>
            <person name="Fulton L."/>
            <person name="Mardis E."/>
            <person name="Dante M."/>
            <person name="Pepin K."/>
            <person name="Hillier L.W."/>
            <person name="Nelson J."/>
            <person name="Spieth J."/>
            <person name="Ryan E."/>
            <person name="Andrews S."/>
            <person name="Geisel C."/>
            <person name="Layman D."/>
            <person name="Du H."/>
            <person name="Ali J."/>
            <person name="Berghoff A."/>
            <person name="Jones K."/>
            <person name="Drone K."/>
            <person name="Cotton M."/>
            <person name="Joshu C."/>
            <person name="Antonoiu B."/>
            <person name="Zidanic M."/>
            <person name="Strong C."/>
            <person name="Sun H."/>
            <person name="Lamar B."/>
            <person name="Yordan C."/>
            <person name="Ma P."/>
            <person name="Zhong J."/>
            <person name="Preston R."/>
            <person name="Vil D."/>
            <person name="Shekher M."/>
            <person name="Matero A."/>
            <person name="Shah R."/>
            <person name="Swaby I.K."/>
            <person name="O'Shaughnessy A."/>
            <person name="Rodriguez M."/>
            <person name="Hoffman J."/>
            <person name="Till S."/>
            <person name="Granat S."/>
            <person name="Shohdy N."/>
            <person name="Hasegawa A."/>
            <person name="Hameed A."/>
            <person name="Lodhi M."/>
            <person name="Johnson A."/>
            <person name="Chen E."/>
            <person name="Marra M.A."/>
            <person name="Martienssen R."/>
            <person name="McCombie W.R."/>
        </authorList>
    </citation>
    <scope>NUCLEOTIDE SEQUENCE [LARGE SCALE GENOMIC DNA]</scope>
    <source>
        <strain>cv. Columbia</strain>
    </source>
</reference>
<reference key="3">
    <citation type="journal article" date="2017" name="Plant J.">
        <title>Araport11: a complete reannotation of the Arabidopsis thaliana reference genome.</title>
        <authorList>
            <person name="Cheng C.Y."/>
            <person name="Krishnakumar V."/>
            <person name="Chan A.P."/>
            <person name="Thibaud-Nissen F."/>
            <person name="Schobel S."/>
            <person name="Town C.D."/>
        </authorList>
    </citation>
    <scope>GENOME REANNOTATION</scope>
    <source>
        <strain>cv. Columbia</strain>
    </source>
</reference>
<reference key="4">
    <citation type="journal article" date="2002" name="Nature">
        <title>MAP kinase signalling cascade in Arabidopsis innate immunity.</title>
        <authorList>
            <person name="Asai T."/>
            <person name="Tena G."/>
            <person name="Plotnikova J."/>
            <person name="Willmann M.R."/>
            <person name="Chiu W.-L."/>
            <person name="Gomez-Gomez L."/>
            <person name="Boller T."/>
            <person name="Ausubel F.M."/>
            <person name="Sheen J."/>
        </authorList>
    </citation>
    <scope>FUNCTION</scope>
    <scope>INDUCTION</scope>
</reference>
<organism>
    <name type="scientific">Arabidopsis thaliana</name>
    <name type="common">Mouse-ear cress</name>
    <dbReference type="NCBI Taxonomy" id="3702"/>
    <lineage>
        <taxon>Eukaryota</taxon>
        <taxon>Viridiplantae</taxon>
        <taxon>Streptophyta</taxon>
        <taxon>Embryophyta</taxon>
        <taxon>Tracheophyta</taxon>
        <taxon>Spermatophyta</taxon>
        <taxon>Magnoliopsida</taxon>
        <taxon>eudicotyledons</taxon>
        <taxon>Gunneridae</taxon>
        <taxon>Pentapetalae</taxon>
        <taxon>rosids</taxon>
        <taxon>malvids</taxon>
        <taxon>Brassicales</taxon>
        <taxon>Brassicaceae</taxon>
        <taxon>Camelineae</taxon>
        <taxon>Arabidopsis</taxon>
    </lineage>
</organism>
<keyword id="KW-0010">Activator</keyword>
<keyword id="KW-0238">DNA-binding</keyword>
<keyword id="KW-0539">Nucleus</keyword>
<keyword id="KW-0611">Plant defense</keyword>
<keyword id="KW-1185">Reference proteome</keyword>
<keyword id="KW-0804">Transcription</keyword>
<keyword id="KW-0805">Transcription regulation</keyword>
<protein>
    <recommendedName>
        <fullName>Probable WRKY transcription factor 29</fullName>
    </recommendedName>
    <alternativeName>
        <fullName>WRKY DNA-binding protein 29</fullName>
    </alternativeName>
</protein>
<accession>Q9SUS1</accession>
<proteinExistence type="evidence at transcript level"/>
<name>WRK29_ARATH</name>
<dbReference type="EMBL" id="AF442394">
    <property type="protein sequence ID" value="AAL35287.1"/>
    <property type="molecule type" value="mRNA"/>
</dbReference>
<dbReference type="EMBL" id="AL035394">
    <property type="protein sequence ID" value="CAA23021.1"/>
    <property type="molecule type" value="Genomic_DNA"/>
</dbReference>
<dbReference type="EMBL" id="AL161559">
    <property type="protein sequence ID" value="CAB79310.1"/>
    <property type="molecule type" value="Genomic_DNA"/>
</dbReference>
<dbReference type="EMBL" id="CP002687">
    <property type="status" value="NOT_ANNOTATED_CDS"/>
    <property type="molecule type" value="Genomic_DNA"/>
</dbReference>
<dbReference type="PIR" id="T05587">
    <property type="entry name" value="T05587"/>
</dbReference>
<dbReference type="SMR" id="Q9SUS1"/>
<dbReference type="STRING" id="3702.Q9SUS1"/>
<dbReference type="PaxDb" id="3702-AT4G23550.1"/>
<dbReference type="Araport" id="AT4G23550"/>
<dbReference type="TAIR" id="AT4G23550">
    <property type="gene designation" value="WRKY29"/>
</dbReference>
<dbReference type="eggNOG" id="ENOG502RZFX">
    <property type="taxonomic scope" value="Eukaryota"/>
</dbReference>
<dbReference type="HOGENOM" id="CLU_029232_0_1_1"/>
<dbReference type="InParanoid" id="Q9SUS1"/>
<dbReference type="PhylomeDB" id="Q9SUS1"/>
<dbReference type="PRO" id="PR:Q9SUS1"/>
<dbReference type="Proteomes" id="UP000006548">
    <property type="component" value="Chromosome 4"/>
</dbReference>
<dbReference type="ExpressionAtlas" id="Q9SUS1">
    <property type="expression patterns" value="baseline and differential"/>
</dbReference>
<dbReference type="GO" id="GO:0005634">
    <property type="term" value="C:nucleus"/>
    <property type="evidence" value="ECO:0000318"/>
    <property type="project" value="GO_Central"/>
</dbReference>
<dbReference type="GO" id="GO:0003700">
    <property type="term" value="F:DNA-binding transcription factor activity"/>
    <property type="evidence" value="ECO:0000250"/>
    <property type="project" value="TAIR"/>
</dbReference>
<dbReference type="GO" id="GO:0000976">
    <property type="term" value="F:transcription cis-regulatory region binding"/>
    <property type="evidence" value="ECO:0000318"/>
    <property type="project" value="GO_Central"/>
</dbReference>
<dbReference type="GO" id="GO:0006952">
    <property type="term" value="P:defense response"/>
    <property type="evidence" value="ECO:0007669"/>
    <property type="project" value="UniProtKB-KW"/>
</dbReference>
<dbReference type="FunFam" id="2.20.25.80:FF:000007">
    <property type="entry name" value="WRKY transcription factor 22"/>
    <property type="match status" value="1"/>
</dbReference>
<dbReference type="Gene3D" id="2.20.25.80">
    <property type="entry name" value="WRKY domain"/>
    <property type="match status" value="1"/>
</dbReference>
<dbReference type="InterPro" id="IPR003657">
    <property type="entry name" value="WRKY_dom"/>
</dbReference>
<dbReference type="InterPro" id="IPR036576">
    <property type="entry name" value="WRKY_dom_sf"/>
</dbReference>
<dbReference type="InterPro" id="IPR044810">
    <property type="entry name" value="WRKY_plant"/>
</dbReference>
<dbReference type="PANTHER" id="PTHR32096:SF106">
    <property type="entry name" value="WRKY TRANSCRIPTION FACTOR 29-RELATED"/>
    <property type="match status" value="1"/>
</dbReference>
<dbReference type="PANTHER" id="PTHR32096">
    <property type="entry name" value="WRKY TRANSCRIPTION FACTOR 30-RELATED-RELATED"/>
    <property type="match status" value="1"/>
</dbReference>
<dbReference type="Pfam" id="PF03106">
    <property type="entry name" value="WRKY"/>
    <property type="match status" value="1"/>
</dbReference>
<dbReference type="SMART" id="SM00774">
    <property type="entry name" value="WRKY"/>
    <property type="match status" value="1"/>
</dbReference>
<dbReference type="SUPFAM" id="SSF118290">
    <property type="entry name" value="WRKY DNA-binding domain"/>
    <property type="match status" value="1"/>
</dbReference>
<dbReference type="PROSITE" id="PS50811">
    <property type="entry name" value="WRKY"/>
    <property type="match status" value="1"/>
</dbReference>
<sequence length="304" mass="33770">MDEGDLEAIVRGYSGSGDAFSGESSGTFSPSFCLPMETSSFYEPEMETSGLDELGELYKPFYPFSTQTILTSSVSLPEDSKPFRDDKKQRSHGCLLSNGSRADHIRISESKSKKSKKNQQKRVVEQVKEENLLSDAWAWRKYGQKPIKGSPYPRSYYRCSSSKGCLARKQVERNPQNPEKFTITYTNEHNHELPTRRNSLAGSTRAKTSQPKPTLTKKSEKEVVSSPTSNPMIPSADESSVAVQEMSVAETSTHQAAGAIEGRRLSNGLPSDLMSGSGTFPSFTGDFDELLNSQEFFSGYLWNY</sequence>
<feature type="chain" id="PRO_0000133671" description="Probable WRKY transcription factor 29">
    <location>
        <begin position="1"/>
        <end position="304"/>
    </location>
</feature>
<feature type="DNA-binding region" description="WRKY" evidence="1">
    <location>
        <begin position="128"/>
        <end position="194"/>
    </location>
</feature>
<feature type="region of interest" description="Disordered" evidence="2">
    <location>
        <begin position="76"/>
        <end position="96"/>
    </location>
</feature>
<feature type="region of interest" description="Disordered" evidence="2">
    <location>
        <begin position="185"/>
        <end position="236"/>
    </location>
</feature>
<feature type="compositionally biased region" description="Basic and acidic residues" evidence="2">
    <location>
        <begin position="78"/>
        <end position="88"/>
    </location>
</feature>
<feature type="compositionally biased region" description="Polar residues" evidence="2">
    <location>
        <begin position="196"/>
        <end position="213"/>
    </location>
</feature>
<feature type="compositionally biased region" description="Polar residues" evidence="2">
    <location>
        <begin position="225"/>
        <end position="236"/>
    </location>
</feature>
<gene>
    <name type="primary">WRKY29</name>
    <name type="ordered locus">At4g23550</name>
    <name type="ORF">F9D16.20</name>
</gene>
<comment type="function">
    <text evidence="3">Transcription factor involved in the expression of defense genes in innate immune response of plants. Interacts specifically with the W box (5'-(T)TGAC[CT]-3'), a frequently occurring elicitor-responsive cis-acting element. Activates WRKY 22, SIRK and its own promoters.</text>
</comment>
<comment type="subcellular location">
    <subcellularLocation>
        <location>Nucleus</location>
    </subcellularLocation>
</comment>
<comment type="induction">
    <text evidence="3">Induced 30 minutes after flagellin treatment.</text>
</comment>
<comment type="miscellaneous">
    <text>Acts downstream a MAPK cascade and therefore might be regulated by phosphorylation. WRKY 22 and WRKY 29 may provide redundant functions.</text>
</comment>
<comment type="similarity">
    <text evidence="4">Belongs to the WRKY group II-e family.</text>
</comment>
<evidence type="ECO:0000255" key="1">
    <source>
        <dbReference type="PROSITE-ProRule" id="PRU00223"/>
    </source>
</evidence>
<evidence type="ECO:0000256" key="2">
    <source>
        <dbReference type="SAM" id="MobiDB-lite"/>
    </source>
</evidence>
<evidence type="ECO:0000269" key="3">
    <source>
    </source>
</evidence>
<evidence type="ECO:0000305" key="4"/>